<keyword id="KW-1005">Bacterial flagellum biogenesis</keyword>
<keyword id="KW-0597">Phosphoprotein</keyword>
<keyword id="KW-1185">Reference proteome</keyword>
<accession>P39808</accession>
<evidence type="ECO:0000269" key="1">
    <source>
    </source>
</evidence>
<feature type="chain" id="PRO_0000049948" description="Uncharacterized protein YvyG">
    <location>
        <begin position="1"/>
        <end position="160"/>
    </location>
</feature>
<feature type="modified residue" description="Phosphotyrosine" evidence="1">
    <location>
        <position position="49"/>
    </location>
</feature>
<dbReference type="EMBL" id="L14437">
    <property type="protein sequence ID" value="AAB59018.1"/>
    <property type="molecule type" value="Genomic_DNA"/>
</dbReference>
<dbReference type="EMBL" id="U56901">
    <property type="protein sequence ID" value="AAC44945.1"/>
    <property type="molecule type" value="Genomic_DNA"/>
</dbReference>
<dbReference type="EMBL" id="AL009126">
    <property type="protein sequence ID" value="CAB15559.1"/>
    <property type="molecule type" value="Genomic_DNA"/>
</dbReference>
<dbReference type="PIR" id="C70049">
    <property type="entry name" value="C70049"/>
</dbReference>
<dbReference type="SMR" id="P39808"/>
<dbReference type="FunCoup" id="P39808">
    <property type="interactions" value="100"/>
</dbReference>
<dbReference type="STRING" id="224308.BSU35420"/>
<dbReference type="iPTMnet" id="P39808"/>
<dbReference type="jPOST" id="P39808"/>
<dbReference type="PaxDb" id="224308-BSU35420"/>
<dbReference type="EnsemblBacteria" id="CAB15559">
    <property type="protein sequence ID" value="CAB15559"/>
    <property type="gene ID" value="BSU_35420"/>
</dbReference>
<dbReference type="GeneID" id="936745"/>
<dbReference type="KEGG" id="bsu:BSU35420"/>
<dbReference type="PATRIC" id="fig|224308.179.peg.3833"/>
<dbReference type="eggNOG" id="COG3418">
    <property type="taxonomic scope" value="Bacteria"/>
</dbReference>
<dbReference type="InParanoid" id="P39808"/>
<dbReference type="OrthoDB" id="2381500at2"/>
<dbReference type="BioCyc" id="BSUB:BSU35420-MONOMER"/>
<dbReference type="Proteomes" id="UP000001570">
    <property type="component" value="Chromosome"/>
</dbReference>
<dbReference type="GO" id="GO:0044780">
    <property type="term" value="P:bacterial-type flagellum assembly"/>
    <property type="evidence" value="ECO:0007669"/>
    <property type="project" value="InterPro"/>
</dbReference>
<dbReference type="Gene3D" id="1.20.58.300">
    <property type="entry name" value="FlgN-like"/>
    <property type="match status" value="1"/>
</dbReference>
<dbReference type="InterPro" id="IPR007809">
    <property type="entry name" value="FlgN-like"/>
</dbReference>
<dbReference type="InterPro" id="IPR036679">
    <property type="entry name" value="FlgN-like_sf"/>
</dbReference>
<dbReference type="Pfam" id="PF05130">
    <property type="entry name" value="FlgN"/>
    <property type="match status" value="1"/>
</dbReference>
<dbReference type="SUPFAM" id="SSF140566">
    <property type="entry name" value="FlgN-like"/>
    <property type="match status" value="1"/>
</dbReference>
<sequence length="160" mass="18182">MSAKAIIEQLKRLCVLHEHLLTLSEEKTEALKAGKTKELSNILTKEQKYIQAITQTEDDRIKTTSAFLGYSENNTISACIAKTSGSEKEELEQLYESLSQVLGRLKKVNEMNRQLTRDALQFISISYDMLVPKENNFNYSKSIKAELPKSSKMKLFDSKA</sequence>
<reference key="1">
    <citation type="journal article" date="1994" name="J. Bacteriol.">
        <title>Identification of flagellar synthesis regulatory and structural genes in a sigma D-dependent operon of Bacillus subtilis.</title>
        <authorList>
            <person name="Mirel D.B."/>
            <person name="Lauer P."/>
            <person name="Chamberlin M.J."/>
        </authorList>
    </citation>
    <scope>NUCLEOTIDE SEQUENCE [GENOMIC DNA]</scope>
    <source>
        <strain>168</strain>
    </source>
</reference>
<reference key="2">
    <citation type="journal article" date="1996" name="Microbiology">
        <title>Sequence of the 305 degrees-307 degrees region of the Bacillus subtilis chromosome.</title>
        <authorList>
            <person name="Soldo B."/>
            <person name="Lazarevic V."/>
            <person name="Mauel C."/>
            <person name="Karamata D."/>
        </authorList>
    </citation>
    <scope>NUCLEOTIDE SEQUENCE [GENOMIC DNA]</scope>
    <source>
        <strain>168</strain>
    </source>
</reference>
<reference key="3">
    <citation type="journal article" date="1997" name="Nature">
        <title>The complete genome sequence of the Gram-positive bacterium Bacillus subtilis.</title>
        <authorList>
            <person name="Kunst F."/>
            <person name="Ogasawara N."/>
            <person name="Moszer I."/>
            <person name="Albertini A.M."/>
            <person name="Alloni G."/>
            <person name="Azevedo V."/>
            <person name="Bertero M.G."/>
            <person name="Bessieres P."/>
            <person name="Bolotin A."/>
            <person name="Borchert S."/>
            <person name="Borriss R."/>
            <person name="Boursier L."/>
            <person name="Brans A."/>
            <person name="Braun M."/>
            <person name="Brignell S.C."/>
            <person name="Bron S."/>
            <person name="Brouillet S."/>
            <person name="Bruschi C.V."/>
            <person name="Caldwell B."/>
            <person name="Capuano V."/>
            <person name="Carter N.M."/>
            <person name="Choi S.-K."/>
            <person name="Codani J.-J."/>
            <person name="Connerton I.F."/>
            <person name="Cummings N.J."/>
            <person name="Daniel R.A."/>
            <person name="Denizot F."/>
            <person name="Devine K.M."/>
            <person name="Duesterhoeft A."/>
            <person name="Ehrlich S.D."/>
            <person name="Emmerson P.T."/>
            <person name="Entian K.-D."/>
            <person name="Errington J."/>
            <person name="Fabret C."/>
            <person name="Ferrari E."/>
            <person name="Foulger D."/>
            <person name="Fritz C."/>
            <person name="Fujita M."/>
            <person name="Fujita Y."/>
            <person name="Fuma S."/>
            <person name="Galizzi A."/>
            <person name="Galleron N."/>
            <person name="Ghim S.-Y."/>
            <person name="Glaser P."/>
            <person name="Goffeau A."/>
            <person name="Golightly E.J."/>
            <person name="Grandi G."/>
            <person name="Guiseppi G."/>
            <person name="Guy B.J."/>
            <person name="Haga K."/>
            <person name="Haiech J."/>
            <person name="Harwood C.R."/>
            <person name="Henaut A."/>
            <person name="Hilbert H."/>
            <person name="Holsappel S."/>
            <person name="Hosono S."/>
            <person name="Hullo M.-F."/>
            <person name="Itaya M."/>
            <person name="Jones L.-M."/>
            <person name="Joris B."/>
            <person name="Karamata D."/>
            <person name="Kasahara Y."/>
            <person name="Klaerr-Blanchard M."/>
            <person name="Klein C."/>
            <person name="Kobayashi Y."/>
            <person name="Koetter P."/>
            <person name="Koningstein G."/>
            <person name="Krogh S."/>
            <person name="Kumano M."/>
            <person name="Kurita K."/>
            <person name="Lapidus A."/>
            <person name="Lardinois S."/>
            <person name="Lauber J."/>
            <person name="Lazarevic V."/>
            <person name="Lee S.-M."/>
            <person name="Levine A."/>
            <person name="Liu H."/>
            <person name="Masuda S."/>
            <person name="Mauel C."/>
            <person name="Medigue C."/>
            <person name="Medina N."/>
            <person name="Mellado R.P."/>
            <person name="Mizuno M."/>
            <person name="Moestl D."/>
            <person name="Nakai S."/>
            <person name="Noback M."/>
            <person name="Noone D."/>
            <person name="O'Reilly M."/>
            <person name="Ogawa K."/>
            <person name="Ogiwara A."/>
            <person name="Oudega B."/>
            <person name="Park S.-H."/>
            <person name="Parro V."/>
            <person name="Pohl T.M."/>
            <person name="Portetelle D."/>
            <person name="Porwollik S."/>
            <person name="Prescott A.M."/>
            <person name="Presecan E."/>
            <person name="Pujic P."/>
            <person name="Purnelle B."/>
            <person name="Rapoport G."/>
            <person name="Rey M."/>
            <person name="Reynolds S."/>
            <person name="Rieger M."/>
            <person name="Rivolta C."/>
            <person name="Rocha E."/>
            <person name="Roche B."/>
            <person name="Rose M."/>
            <person name="Sadaie Y."/>
            <person name="Sato T."/>
            <person name="Scanlan E."/>
            <person name="Schleich S."/>
            <person name="Schroeter R."/>
            <person name="Scoffone F."/>
            <person name="Sekiguchi J."/>
            <person name="Sekowska A."/>
            <person name="Seror S.J."/>
            <person name="Serror P."/>
            <person name="Shin B.-S."/>
            <person name="Soldo B."/>
            <person name="Sorokin A."/>
            <person name="Tacconi E."/>
            <person name="Takagi T."/>
            <person name="Takahashi H."/>
            <person name="Takemaru K."/>
            <person name="Takeuchi M."/>
            <person name="Tamakoshi A."/>
            <person name="Tanaka T."/>
            <person name="Terpstra P."/>
            <person name="Tognoni A."/>
            <person name="Tosato V."/>
            <person name="Uchiyama S."/>
            <person name="Vandenbol M."/>
            <person name="Vannier F."/>
            <person name="Vassarotti A."/>
            <person name="Viari A."/>
            <person name="Wambutt R."/>
            <person name="Wedler E."/>
            <person name="Wedler H."/>
            <person name="Weitzenegger T."/>
            <person name="Winters P."/>
            <person name="Wipat A."/>
            <person name="Yamamoto H."/>
            <person name="Yamane K."/>
            <person name="Yasumoto K."/>
            <person name="Yata K."/>
            <person name="Yoshida K."/>
            <person name="Yoshikawa H.-F."/>
            <person name="Zumstein E."/>
            <person name="Yoshikawa H."/>
            <person name="Danchin A."/>
        </authorList>
    </citation>
    <scope>NUCLEOTIDE SEQUENCE [LARGE SCALE GENOMIC DNA]</scope>
    <source>
        <strain>168</strain>
    </source>
</reference>
<reference key="4">
    <citation type="journal article" date="2007" name="Mol. Cell. Proteomics">
        <title>The serine/threonine/tyrosine phosphoproteome of the model bacterium Bacillus subtilis.</title>
        <authorList>
            <person name="Macek B."/>
            <person name="Mijakovic I."/>
            <person name="Olsen J.V."/>
            <person name="Gnad F."/>
            <person name="Kumar C."/>
            <person name="Jensen P.R."/>
            <person name="Mann M."/>
        </authorList>
    </citation>
    <scope>PHOSPHORYLATION [LARGE SCALE ANALYSIS] AT TYR-49</scope>
    <scope>IDENTIFICATION BY MASS SPECTROMETRY</scope>
    <source>
        <strain>168</strain>
    </source>
</reference>
<comment type="function">
    <text>May be involved in the assembly, structure, or function of the flagellum. May polymerize to form a filamentous structure that is part of the flagellum.</text>
</comment>
<name>YVYG_BACSU</name>
<protein>
    <recommendedName>
        <fullName>Uncharacterized protein YvyG</fullName>
    </recommendedName>
</protein>
<organism>
    <name type="scientific">Bacillus subtilis (strain 168)</name>
    <dbReference type="NCBI Taxonomy" id="224308"/>
    <lineage>
        <taxon>Bacteria</taxon>
        <taxon>Bacillati</taxon>
        <taxon>Bacillota</taxon>
        <taxon>Bacilli</taxon>
        <taxon>Bacillales</taxon>
        <taxon>Bacillaceae</taxon>
        <taxon>Bacillus</taxon>
    </lineage>
</organism>
<gene>
    <name type="primary">yvyG</name>
    <name type="synonym">yviC</name>
    <name type="ordered locus">BSU35420</name>
</gene>
<proteinExistence type="evidence at protein level"/>